<proteinExistence type="inferred from homology"/>
<comment type="catalytic activity">
    <reaction evidence="1">
        <text>tRNA(Lys) + L-lysine + ATP = L-lysyl-tRNA(Lys) + AMP + diphosphate</text>
        <dbReference type="Rhea" id="RHEA:20792"/>
        <dbReference type="Rhea" id="RHEA-COMP:9696"/>
        <dbReference type="Rhea" id="RHEA-COMP:9697"/>
        <dbReference type="ChEBI" id="CHEBI:30616"/>
        <dbReference type="ChEBI" id="CHEBI:32551"/>
        <dbReference type="ChEBI" id="CHEBI:33019"/>
        <dbReference type="ChEBI" id="CHEBI:78442"/>
        <dbReference type="ChEBI" id="CHEBI:78529"/>
        <dbReference type="ChEBI" id="CHEBI:456215"/>
        <dbReference type="EC" id="6.1.1.6"/>
    </reaction>
</comment>
<comment type="cofactor">
    <cofactor evidence="1">
        <name>Mg(2+)</name>
        <dbReference type="ChEBI" id="CHEBI:18420"/>
    </cofactor>
    <text evidence="1">Binds 3 Mg(2+) ions per subunit.</text>
</comment>
<comment type="subunit">
    <text evidence="1">Homodimer.</text>
</comment>
<comment type="subcellular location">
    <subcellularLocation>
        <location evidence="1">Cytoplasm</location>
    </subcellularLocation>
</comment>
<comment type="similarity">
    <text evidence="1">Belongs to the class-II aminoacyl-tRNA synthetase family.</text>
</comment>
<organism>
    <name type="scientific">Neisseria gonorrhoeae (strain ATCC 700825 / FA 1090)</name>
    <dbReference type="NCBI Taxonomy" id="242231"/>
    <lineage>
        <taxon>Bacteria</taxon>
        <taxon>Pseudomonadati</taxon>
        <taxon>Pseudomonadota</taxon>
        <taxon>Betaproteobacteria</taxon>
        <taxon>Neisseriales</taxon>
        <taxon>Neisseriaceae</taxon>
        <taxon>Neisseria</taxon>
    </lineage>
</organism>
<keyword id="KW-0030">Aminoacyl-tRNA synthetase</keyword>
<keyword id="KW-0067">ATP-binding</keyword>
<keyword id="KW-0963">Cytoplasm</keyword>
<keyword id="KW-0436">Ligase</keyword>
<keyword id="KW-0460">Magnesium</keyword>
<keyword id="KW-0479">Metal-binding</keyword>
<keyword id="KW-0547">Nucleotide-binding</keyword>
<keyword id="KW-0648">Protein biosynthesis</keyword>
<keyword id="KW-1185">Reference proteome</keyword>
<reference key="1">
    <citation type="submission" date="2003-03" db="EMBL/GenBank/DDBJ databases">
        <title>The complete genome sequence of Neisseria gonorrhoeae.</title>
        <authorList>
            <person name="Lewis L.A."/>
            <person name="Gillaspy A.F."/>
            <person name="McLaughlin R.E."/>
            <person name="Gipson M."/>
            <person name="Ducey T.F."/>
            <person name="Ownbey T."/>
            <person name="Hartman K."/>
            <person name="Nydick C."/>
            <person name="Carson M.B."/>
            <person name="Vaughn J."/>
            <person name="Thomson C."/>
            <person name="Song L."/>
            <person name="Lin S."/>
            <person name="Yuan X."/>
            <person name="Najar F."/>
            <person name="Zhan M."/>
            <person name="Ren Q."/>
            <person name="Zhu H."/>
            <person name="Qi S."/>
            <person name="Kenton S.M."/>
            <person name="Lai H."/>
            <person name="White J.D."/>
            <person name="Clifton S."/>
            <person name="Roe B.A."/>
            <person name="Dyer D.W."/>
        </authorList>
    </citation>
    <scope>NUCLEOTIDE SEQUENCE [LARGE SCALE GENOMIC DNA]</scope>
    <source>
        <strain>ATCC 700825 / FA 1090</strain>
    </source>
</reference>
<protein>
    <recommendedName>
        <fullName evidence="1">Lysine--tRNA ligase</fullName>
        <ecNumber evidence="1">6.1.1.6</ecNumber>
    </recommendedName>
    <alternativeName>
        <fullName evidence="1">Lysyl-tRNA synthetase</fullName>
        <shortName evidence="1">LysRS</shortName>
    </alternativeName>
</protein>
<name>SYK_NEIG1</name>
<sequence>MSEQNHPQTEPQLDENQIIALRREKLNNIRQQRNAYPNDFKRDSFAADLQAQYGEIGKEELDPQAVPVKIAGRMMLKRQMGKASFATIQDVTGQIQLYLNNKGVSQEVLDDFNHWDLGDIVGAEGTLFKTNHGELTVRVSDIRLLSKSLRPLPDKHKGLSDQETKYRQRYVDLIANEESRNTFIKRSQIIQSVRNFMVGEHYLEVETPMMHPIPGGATAKPFVTHHNALDIPLYLRIAPELYLKRLVVGGLERVFEINRSFRNEGMSVRHNPEFTMIEFYEAFSDYERMMQMAEDIIRNASRTVNGTANITYNGKEVDLESPFERLTILEAIKKYNPHYTDEQLNDAEWLKKEIVKHGESLPPSPGIGSLQLALFEGCAEGKLWNPTFIVDYPVEVSPLARASDTKQGLTERFELFVVGRELANGYSELNDPEDQAERFKSQVAQKDAGDDEAMHYDADYIRAMEFGLPPTGGCGIGIDRLVMLLTDLQTIRDVILFPQMRPE</sequence>
<accession>Q5F6U2</accession>
<feature type="chain" id="PRO_1000012897" description="Lysine--tRNA ligase">
    <location>
        <begin position="1"/>
        <end position="503"/>
    </location>
</feature>
<feature type="binding site" evidence="1">
    <location>
        <position position="414"/>
    </location>
    <ligand>
        <name>Mg(2+)</name>
        <dbReference type="ChEBI" id="CHEBI:18420"/>
        <label>1</label>
    </ligand>
</feature>
<feature type="binding site" evidence="1">
    <location>
        <position position="421"/>
    </location>
    <ligand>
        <name>Mg(2+)</name>
        <dbReference type="ChEBI" id="CHEBI:18420"/>
        <label>1</label>
    </ligand>
</feature>
<feature type="binding site" evidence="1">
    <location>
        <position position="421"/>
    </location>
    <ligand>
        <name>Mg(2+)</name>
        <dbReference type="ChEBI" id="CHEBI:18420"/>
        <label>2</label>
    </ligand>
</feature>
<gene>
    <name evidence="1" type="primary">lysS</name>
    <name type="ordered locus">NGO_1454</name>
</gene>
<dbReference type="EC" id="6.1.1.6" evidence="1"/>
<dbReference type="EMBL" id="AE004969">
    <property type="protein sequence ID" value="AAW90095.1"/>
    <property type="molecule type" value="Genomic_DNA"/>
</dbReference>
<dbReference type="RefSeq" id="WP_003689332.1">
    <property type="nucleotide sequence ID" value="NC_002946.2"/>
</dbReference>
<dbReference type="RefSeq" id="YP_208507.1">
    <property type="nucleotide sequence ID" value="NC_002946.2"/>
</dbReference>
<dbReference type="SMR" id="Q5F6U2"/>
<dbReference type="STRING" id="242231.NGO_1454"/>
<dbReference type="GeneID" id="66753662"/>
<dbReference type="KEGG" id="ngo:NGO_1454"/>
<dbReference type="PATRIC" id="fig|242231.10.peg.1713"/>
<dbReference type="HOGENOM" id="CLU_008255_6_0_4"/>
<dbReference type="Proteomes" id="UP000000535">
    <property type="component" value="Chromosome"/>
</dbReference>
<dbReference type="GO" id="GO:0005829">
    <property type="term" value="C:cytosol"/>
    <property type="evidence" value="ECO:0007669"/>
    <property type="project" value="TreeGrafter"/>
</dbReference>
<dbReference type="GO" id="GO:0005524">
    <property type="term" value="F:ATP binding"/>
    <property type="evidence" value="ECO:0007669"/>
    <property type="project" value="UniProtKB-UniRule"/>
</dbReference>
<dbReference type="GO" id="GO:0004824">
    <property type="term" value="F:lysine-tRNA ligase activity"/>
    <property type="evidence" value="ECO:0007669"/>
    <property type="project" value="UniProtKB-UniRule"/>
</dbReference>
<dbReference type="GO" id="GO:0000287">
    <property type="term" value="F:magnesium ion binding"/>
    <property type="evidence" value="ECO:0007669"/>
    <property type="project" value="UniProtKB-UniRule"/>
</dbReference>
<dbReference type="GO" id="GO:0000049">
    <property type="term" value="F:tRNA binding"/>
    <property type="evidence" value="ECO:0007669"/>
    <property type="project" value="TreeGrafter"/>
</dbReference>
<dbReference type="GO" id="GO:0006430">
    <property type="term" value="P:lysyl-tRNA aminoacylation"/>
    <property type="evidence" value="ECO:0007669"/>
    <property type="project" value="UniProtKB-UniRule"/>
</dbReference>
<dbReference type="CDD" id="cd00775">
    <property type="entry name" value="LysRS_core"/>
    <property type="match status" value="1"/>
</dbReference>
<dbReference type="CDD" id="cd04322">
    <property type="entry name" value="LysRS_N"/>
    <property type="match status" value="1"/>
</dbReference>
<dbReference type="FunFam" id="2.40.50.140:FF:000024">
    <property type="entry name" value="Lysine--tRNA ligase"/>
    <property type="match status" value="1"/>
</dbReference>
<dbReference type="FunFam" id="3.30.930.10:FF:000001">
    <property type="entry name" value="Lysine--tRNA ligase"/>
    <property type="match status" value="1"/>
</dbReference>
<dbReference type="Gene3D" id="3.30.930.10">
    <property type="entry name" value="Bira Bifunctional Protein, Domain 2"/>
    <property type="match status" value="1"/>
</dbReference>
<dbReference type="Gene3D" id="2.40.50.140">
    <property type="entry name" value="Nucleic acid-binding proteins"/>
    <property type="match status" value="1"/>
</dbReference>
<dbReference type="HAMAP" id="MF_00252">
    <property type="entry name" value="Lys_tRNA_synth_class2"/>
    <property type="match status" value="1"/>
</dbReference>
<dbReference type="InterPro" id="IPR004364">
    <property type="entry name" value="Aa-tRNA-synt_II"/>
</dbReference>
<dbReference type="InterPro" id="IPR006195">
    <property type="entry name" value="aa-tRNA-synth_II"/>
</dbReference>
<dbReference type="InterPro" id="IPR045864">
    <property type="entry name" value="aa-tRNA-synth_II/BPL/LPL"/>
</dbReference>
<dbReference type="InterPro" id="IPR002313">
    <property type="entry name" value="Lys-tRNA-ligase_II"/>
</dbReference>
<dbReference type="InterPro" id="IPR044136">
    <property type="entry name" value="Lys-tRNA-ligase_II_N"/>
</dbReference>
<dbReference type="InterPro" id="IPR018149">
    <property type="entry name" value="Lys-tRNA-synth_II_C"/>
</dbReference>
<dbReference type="InterPro" id="IPR012340">
    <property type="entry name" value="NA-bd_OB-fold"/>
</dbReference>
<dbReference type="InterPro" id="IPR004365">
    <property type="entry name" value="NA-bd_OB_tRNA"/>
</dbReference>
<dbReference type="NCBIfam" id="TIGR00499">
    <property type="entry name" value="lysS_bact"/>
    <property type="match status" value="1"/>
</dbReference>
<dbReference type="NCBIfam" id="NF001756">
    <property type="entry name" value="PRK00484.1"/>
    <property type="match status" value="1"/>
</dbReference>
<dbReference type="PANTHER" id="PTHR42918:SF15">
    <property type="entry name" value="LYSINE--TRNA LIGASE, CHLOROPLASTIC_MITOCHONDRIAL"/>
    <property type="match status" value="1"/>
</dbReference>
<dbReference type="PANTHER" id="PTHR42918">
    <property type="entry name" value="LYSYL-TRNA SYNTHETASE"/>
    <property type="match status" value="1"/>
</dbReference>
<dbReference type="Pfam" id="PF00152">
    <property type="entry name" value="tRNA-synt_2"/>
    <property type="match status" value="1"/>
</dbReference>
<dbReference type="Pfam" id="PF01336">
    <property type="entry name" value="tRNA_anti-codon"/>
    <property type="match status" value="1"/>
</dbReference>
<dbReference type="PRINTS" id="PR00982">
    <property type="entry name" value="TRNASYNTHLYS"/>
</dbReference>
<dbReference type="SUPFAM" id="SSF55681">
    <property type="entry name" value="Class II aaRS and biotin synthetases"/>
    <property type="match status" value="1"/>
</dbReference>
<dbReference type="SUPFAM" id="SSF50249">
    <property type="entry name" value="Nucleic acid-binding proteins"/>
    <property type="match status" value="1"/>
</dbReference>
<dbReference type="PROSITE" id="PS50862">
    <property type="entry name" value="AA_TRNA_LIGASE_II"/>
    <property type="match status" value="1"/>
</dbReference>
<evidence type="ECO:0000255" key="1">
    <source>
        <dbReference type="HAMAP-Rule" id="MF_00252"/>
    </source>
</evidence>